<name>FZD7B_XENLA</name>
<comment type="function">
    <text evidence="3 8 9 10">Receptor for Wnt proteins. Acts in both canonical and non-canonical Wnt pathways. Although different papers report differing Wnt preferences, wnt5a, wnt8b and wnt11 have been proposed as synergists. In the canonical Wnt pathway, acts via beta-catenin to promote the expression of the dorsal genes siamois, twin and nodal3 and to establish the dorsal axis of the embryo and induce dorsal mesoderm formation. In a non-canonical Wnt/planar cell polarity (PCP) pathway, acts with sdc4 and dvl2/dsh to regulate convergent extension cell movements during gastrulation. Triggers phosphorylation of dvl2/dsh and its translocation to the plasma membrane. In a third branch of Wnt signaling, acts in a non-canonical pathway via trimeric G proteins, and independently of dvl2/dsh, to recruit protein kinase C (PKC) to the membrane and thus activate PKC. PKC signaling controls cell sorting and tissue separation during gastrulation.</text>
</comment>
<comment type="subunit">
    <text evidence="1 10">Interacts with wnt11 and sdc4. The extracellular domain interacts with the extracellular domain of pcdh8/papc (By similarity). Interacts (via C-terminus) with dvl1 (via PDZ domain).</text>
</comment>
<comment type="interaction">
    <interactant intactId="EBI-3870271">
        <id>Q8AVJ9</id>
    </interactant>
    <interactant intactId="EBI-1538407">
        <id>P51141</id>
        <label>Dvl1</label>
    </interactant>
    <organismsDiffer>true</organismsDiffer>
    <experiments>3</experiments>
</comment>
<comment type="subcellular location">
    <subcellularLocation>
        <location evidence="11">Cell membrane</location>
        <topology evidence="11">Multi-pass membrane protein</topology>
    </subcellularLocation>
    <subcellularLocation>
        <location evidence="2">Endosome membrane</location>
        <topology evidence="2">Multi-pass membrane protein</topology>
    </subcellularLocation>
    <text evidence="2">Associated to the plasma membrane in the presence of FZD7 and phosphatidylinositol 4,5-bisphosphate (PIP2). Localized in recycling endosomes in other conditions.</text>
</comment>
<comment type="tissue specificity">
    <text evidence="7">During gastrulation, broadly expressed on the dorsal side of the embryo in deep mesodermal cells surrounding the blastopore lip and in presumptive anterior neuroectoderm. During neurulation, localized to the cranial neural crest and heart field where expression is retained at later stages in addition to new areas of expression in the neural tube, pronephros and tailbud. At tailbud stage, expressed in the pronephric duct, and broad head expression becomes more restricted to the hindbrain. In tadpoles, strongly expressed in the eye and the pericardium and myocardium of the developing heart.</text>
</comment>
<comment type="domain">
    <text>Lys-Thr-X-X-X-Trp motif interacts with the PDZ domain of Dvl (Disheveled) family members and is involved in the activation of the Wnt/beta-catenin signaling pathway.</text>
</comment>
<comment type="domain">
    <text evidence="4">The FZ domain is involved in binding with Wnt ligands.</text>
</comment>
<comment type="domain">
    <text>The extracellular domain interacts with Wnt proteins and the intracellular C-terminus transmits the Wnt signal.</text>
</comment>
<comment type="similarity">
    <text evidence="5">Belongs to the G-protein coupled receptor Fz/Smo family.</text>
</comment>
<protein>
    <recommendedName>
        <fullName>Frizzled-7-B</fullName>
        <shortName>Fz-7-B</shortName>
        <shortName>Xfz7-B</shortName>
    </recommendedName>
</protein>
<reference evidence="11" key="1">
    <citation type="journal article" date="1999" name="Mech. Dev.">
        <title>Two novel Xenopus frizzled genes expressed in developing heart and brain.</title>
        <authorList>
            <person name="Wheeler G.N."/>
            <person name="Hoppler S."/>
        </authorList>
    </citation>
    <scope>NUCLEOTIDE SEQUENCE [MRNA]</scope>
    <scope>TISSUE SPECIFICITY</scope>
</reference>
<reference evidence="12" key="2">
    <citation type="submission" date="2003-01" db="EMBL/GenBank/DDBJ databases">
        <authorList>
            <consortium name="NIH - Xenopus Gene Collection (XGC) project"/>
        </authorList>
    </citation>
    <scope>NUCLEOTIDE SEQUENCE [LARGE SCALE MRNA]</scope>
    <source>
        <tissue evidence="12">Embryo</tissue>
    </source>
</reference>
<reference evidence="11" key="3">
    <citation type="journal article" date="2000" name="Curr. Biol.">
        <title>Inducible gene expression in transgenic Xenopus embryos.</title>
        <authorList>
            <person name="Wheeler G.N."/>
            <person name="Hamilton F.S."/>
            <person name="Hoppler S."/>
        </authorList>
    </citation>
    <scope>FUNCTION</scope>
</reference>
<reference evidence="11" key="4">
    <citation type="journal article" date="2001" name="Genesis">
        <title>Xenopus frizzled-7 morphant displays defects in dorsoventral patterning and convergent extension movements during gastrulation.</title>
        <authorList>
            <person name="Sumanas S."/>
            <person name="Ekker S.C."/>
        </authorList>
    </citation>
    <scope>FUNCTION</scope>
</reference>
<reference key="5">
    <citation type="journal article" date="2003" name="Mol. Cell">
        <title>Direct binding of the PDZ domain of Dishevelled to a conserved internal sequence in the C-terminal region of Frizzled.</title>
        <authorList>
            <person name="Wong H.C."/>
            <person name="Bourdelas A."/>
            <person name="Krauss A."/>
            <person name="Lee H.J."/>
            <person name="Shao Y."/>
            <person name="Wu D."/>
            <person name="Mlodzik M."/>
            <person name="Shi D.L."/>
            <person name="Zheng J."/>
        </authorList>
    </citation>
    <scope>FUNCTION</scope>
    <scope>INTERACTION WITH DVL1</scope>
    <scope>MUTAGENESIS OF LYS-526 AND TRP-531</scope>
</reference>
<sequence length="548" mass="61906">MLAPVSLLFCLFLQLCPSAQQYHGEKGISVPDHGFCQPISIPLCTDIAYNQTIMPNLLGHTNQEDAGLEVHQFYPLVKVQCSPELRFFLCSMYAPVCTVLEQAIPPCRSLCERARQGCEALMNKFGFQWPERLRCENFPVHGAGEICVGQNTSDNSPSGPTARPTLNLPDSITFQPHPHRDFTCPRQLKVPPYLGYRFLGEKDCGAPCEPGKANGLMYFKEEEVRFARLWVGIWAILCGISTLFTVLTYLVDMRRFSYPERPIIFLSGCYFMVAVAYTAGFLLEERAVCVERFSEDSYRTVAQGTKKEGCTILFMILYFFGMASSIWWVILALTWFLSAGMKWGHEAIEANSQYFHLAAWAVPAVKTITILAMGQVDGDVLSGVCYVGINSVDSLRGFVLAPLFVYLFLGTSFLLAGFVSLFRIRTIMKHDGTKTEKLEKLMVRIGVFSVMYTVPATIVLACYFYEQAFRDTWEKTWLVHTCKGYAVPCPNYNFAPMSPDFTVFMIKYLMTMIVGITSSFWIWSGKTLQSWRRFYHRLGNGSKGETAV</sequence>
<proteinExistence type="evidence at protein level"/>
<keyword id="KW-1003">Cell membrane</keyword>
<keyword id="KW-0217">Developmental protein</keyword>
<keyword id="KW-1015">Disulfide bond</keyword>
<keyword id="KW-0967">Endosome</keyword>
<keyword id="KW-0297">G-protein coupled receptor</keyword>
<keyword id="KW-0325">Glycoprotein</keyword>
<keyword id="KW-0472">Membrane</keyword>
<keyword id="KW-0675">Receptor</keyword>
<keyword id="KW-1185">Reference proteome</keyword>
<keyword id="KW-0732">Signal</keyword>
<keyword id="KW-0807">Transducer</keyword>
<keyword id="KW-0812">Transmembrane</keyword>
<keyword id="KW-1133">Transmembrane helix</keyword>
<keyword id="KW-0879">Wnt signaling pathway</keyword>
<dbReference type="EMBL" id="AF159106">
    <property type="protein sequence ID" value="AAD44331.1"/>
    <property type="molecule type" value="mRNA"/>
</dbReference>
<dbReference type="EMBL" id="BC042228">
    <property type="protein sequence ID" value="AAH42228.1"/>
    <property type="molecule type" value="mRNA"/>
</dbReference>
<dbReference type="SMR" id="Q8AVJ9"/>
<dbReference type="IntAct" id="Q8AVJ9">
    <property type="interactions" value="1"/>
</dbReference>
<dbReference type="GlyCosmos" id="Q8AVJ9">
    <property type="glycosylation" value="2 sites, No reported glycans"/>
</dbReference>
<dbReference type="AGR" id="Xenbase:XB-GENE-17333315"/>
<dbReference type="Xenbase" id="XB-GENE-17333315">
    <property type="gene designation" value="fzd7.S"/>
</dbReference>
<dbReference type="Proteomes" id="UP000186698">
    <property type="component" value="Unplaced"/>
</dbReference>
<dbReference type="GO" id="GO:0010008">
    <property type="term" value="C:endosome membrane"/>
    <property type="evidence" value="ECO:0007669"/>
    <property type="project" value="UniProtKB-SubCell"/>
</dbReference>
<dbReference type="GO" id="GO:0016020">
    <property type="term" value="C:membrane"/>
    <property type="evidence" value="ECO:0000303"/>
    <property type="project" value="UniProtKB"/>
</dbReference>
<dbReference type="GO" id="GO:0005886">
    <property type="term" value="C:plasma membrane"/>
    <property type="evidence" value="ECO:0000318"/>
    <property type="project" value="GO_Central"/>
</dbReference>
<dbReference type="GO" id="GO:0004930">
    <property type="term" value="F:G protein-coupled receptor activity"/>
    <property type="evidence" value="ECO:0007669"/>
    <property type="project" value="UniProtKB-KW"/>
</dbReference>
<dbReference type="GO" id="GO:0045545">
    <property type="term" value="F:syndecan binding"/>
    <property type="evidence" value="ECO:0000250"/>
    <property type="project" value="UniProtKB"/>
</dbReference>
<dbReference type="GO" id="GO:0042813">
    <property type="term" value="F:Wnt receptor activity"/>
    <property type="evidence" value="ECO:0000318"/>
    <property type="project" value="GO_Central"/>
</dbReference>
<dbReference type="GO" id="GO:0017147">
    <property type="term" value="F:Wnt-protein binding"/>
    <property type="evidence" value="ECO:0000250"/>
    <property type="project" value="UniProtKB"/>
</dbReference>
<dbReference type="GO" id="GO:0060070">
    <property type="term" value="P:canonical Wnt signaling pathway"/>
    <property type="evidence" value="ECO:0000318"/>
    <property type="project" value="GO_Central"/>
</dbReference>
<dbReference type="GO" id="GO:0060027">
    <property type="term" value="P:convergent extension involved in gastrulation"/>
    <property type="evidence" value="ECO:0000315"/>
    <property type="project" value="UniProtKB"/>
</dbReference>
<dbReference type="GO" id="GO:0009950">
    <property type="term" value="P:dorsal/ventral axis specification"/>
    <property type="evidence" value="ECO:0000315"/>
    <property type="project" value="UniProtKB"/>
</dbReference>
<dbReference type="GO" id="GO:0001707">
    <property type="term" value="P:mesoderm formation"/>
    <property type="evidence" value="ECO:0000250"/>
    <property type="project" value="UniProtKB"/>
</dbReference>
<dbReference type="GO" id="GO:0035567">
    <property type="term" value="P:non-canonical Wnt signaling pathway"/>
    <property type="evidence" value="ECO:0000318"/>
    <property type="project" value="GO_Central"/>
</dbReference>
<dbReference type="GO" id="GO:0008104">
    <property type="term" value="P:protein localization"/>
    <property type="evidence" value="ECO:0000250"/>
    <property type="project" value="UniProtKB"/>
</dbReference>
<dbReference type="GO" id="GO:0048729">
    <property type="term" value="P:tissue morphogenesis"/>
    <property type="evidence" value="ECO:0000250"/>
    <property type="project" value="UniProtKB"/>
</dbReference>
<dbReference type="GO" id="GO:0016055">
    <property type="term" value="P:Wnt signaling pathway"/>
    <property type="evidence" value="ECO:0000315"/>
    <property type="project" value="UniProtKB"/>
</dbReference>
<dbReference type="CDD" id="cd15246">
    <property type="entry name" value="7tmF_FZD7"/>
    <property type="match status" value="1"/>
</dbReference>
<dbReference type="CDD" id="cd07466">
    <property type="entry name" value="CRD_FZ7"/>
    <property type="match status" value="1"/>
</dbReference>
<dbReference type="FunFam" id="1.10.2000.10:FF:000003">
    <property type="entry name" value="Frizzled class receptor 2"/>
    <property type="match status" value="1"/>
</dbReference>
<dbReference type="FunFam" id="1.20.1070.10:FF:000029">
    <property type="entry name" value="Frizzled class receptor 2"/>
    <property type="match status" value="1"/>
</dbReference>
<dbReference type="Gene3D" id="1.10.2000.10">
    <property type="entry name" value="Frizzled cysteine-rich domain"/>
    <property type="match status" value="1"/>
</dbReference>
<dbReference type="Gene3D" id="1.20.1070.10">
    <property type="entry name" value="Rhodopsin 7-helix transmembrane proteins"/>
    <property type="match status" value="1"/>
</dbReference>
<dbReference type="InterPro" id="IPR042742">
    <property type="entry name" value="Frizzled-7_CRD"/>
</dbReference>
<dbReference type="InterPro" id="IPR015526">
    <property type="entry name" value="Frizzled/SFRP"/>
</dbReference>
<dbReference type="InterPro" id="IPR000539">
    <property type="entry name" value="Frizzled/Smoothened_7TM"/>
</dbReference>
<dbReference type="InterPro" id="IPR020067">
    <property type="entry name" value="Frizzled_dom"/>
</dbReference>
<dbReference type="InterPro" id="IPR036790">
    <property type="entry name" value="Frizzled_dom_sf"/>
</dbReference>
<dbReference type="InterPro" id="IPR017981">
    <property type="entry name" value="GPCR_2-like_7TM"/>
</dbReference>
<dbReference type="PANTHER" id="PTHR11309">
    <property type="entry name" value="FRIZZLED"/>
    <property type="match status" value="1"/>
</dbReference>
<dbReference type="PANTHER" id="PTHR11309:SF31">
    <property type="entry name" value="FRIZZLED-7"/>
    <property type="match status" value="1"/>
</dbReference>
<dbReference type="Pfam" id="PF01534">
    <property type="entry name" value="Frizzled"/>
    <property type="match status" value="1"/>
</dbReference>
<dbReference type="Pfam" id="PF01392">
    <property type="entry name" value="Fz"/>
    <property type="match status" value="1"/>
</dbReference>
<dbReference type="PRINTS" id="PR00489">
    <property type="entry name" value="FRIZZLED"/>
</dbReference>
<dbReference type="SMART" id="SM00063">
    <property type="entry name" value="FRI"/>
    <property type="match status" value="1"/>
</dbReference>
<dbReference type="SMART" id="SM01330">
    <property type="entry name" value="Frizzled"/>
    <property type="match status" value="1"/>
</dbReference>
<dbReference type="SUPFAM" id="SSF63501">
    <property type="entry name" value="Frizzled cysteine-rich domain"/>
    <property type="match status" value="1"/>
</dbReference>
<dbReference type="PROSITE" id="PS50038">
    <property type="entry name" value="FZ"/>
    <property type="match status" value="1"/>
</dbReference>
<dbReference type="PROSITE" id="PS50261">
    <property type="entry name" value="G_PROTEIN_RECEP_F2_4"/>
    <property type="match status" value="1"/>
</dbReference>
<evidence type="ECO:0000250" key="1"/>
<evidence type="ECO:0000250" key="2">
    <source>
        <dbReference type="UniProtKB" id="O75084"/>
    </source>
</evidence>
<evidence type="ECO:0000250" key="3">
    <source>
        <dbReference type="UniProtKB" id="Q9PUK8"/>
    </source>
</evidence>
<evidence type="ECO:0000250" key="4">
    <source>
        <dbReference type="UniProtKB" id="Q9VVX3"/>
    </source>
</evidence>
<evidence type="ECO:0000255" key="5"/>
<evidence type="ECO:0000255" key="6">
    <source>
        <dbReference type="PROSITE-ProRule" id="PRU00090"/>
    </source>
</evidence>
<evidence type="ECO:0000269" key="7">
    <source>
    </source>
</evidence>
<evidence type="ECO:0000269" key="8">
    <source>
    </source>
</evidence>
<evidence type="ECO:0000269" key="9">
    <source>
    </source>
</evidence>
<evidence type="ECO:0000269" key="10">
    <source>
    </source>
</evidence>
<evidence type="ECO:0000305" key="11"/>
<evidence type="ECO:0000312" key="12">
    <source>
        <dbReference type="EMBL" id="AAH42228.1"/>
    </source>
</evidence>
<gene>
    <name type="primary">fzd7-b</name>
    <name type="synonym">fz7-b</name>
</gene>
<accession>Q8AVJ9</accession>
<feature type="signal peptide" evidence="5">
    <location>
        <begin position="1"/>
        <end position="18"/>
    </location>
</feature>
<feature type="chain" id="PRO_0000282949" description="Frizzled-7-B" evidence="5">
    <location>
        <begin position="19"/>
        <end position="548"/>
    </location>
</feature>
<feature type="topological domain" description="Extracellular" evidence="5">
    <location>
        <begin position="19"/>
        <end position="230"/>
    </location>
</feature>
<feature type="transmembrane region" description="Helical" evidence="5">
    <location>
        <begin position="231"/>
        <end position="251"/>
    </location>
</feature>
<feature type="topological domain" description="Cytoplasmic" evidence="5">
    <location>
        <begin position="252"/>
        <end position="262"/>
    </location>
</feature>
<feature type="transmembrane region" description="Helical" evidence="5">
    <location>
        <begin position="263"/>
        <end position="283"/>
    </location>
</feature>
<feature type="topological domain" description="Extracellular" evidence="5">
    <location>
        <begin position="284"/>
        <end position="311"/>
    </location>
</feature>
<feature type="transmembrane region" description="Helical" evidence="5">
    <location>
        <begin position="312"/>
        <end position="332"/>
    </location>
</feature>
<feature type="topological domain" description="Cytoplasmic" evidence="5">
    <location>
        <begin position="333"/>
        <end position="353"/>
    </location>
</feature>
<feature type="transmembrane region" description="Helical" evidence="5">
    <location>
        <begin position="354"/>
        <end position="374"/>
    </location>
</feature>
<feature type="topological domain" description="Extracellular" evidence="5">
    <location>
        <begin position="375"/>
        <end position="397"/>
    </location>
</feature>
<feature type="transmembrane region" description="Helical" evidence="5">
    <location>
        <begin position="398"/>
        <end position="418"/>
    </location>
</feature>
<feature type="topological domain" description="Cytoplasmic" evidence="5">
    <location>
        <begin position="419"/>
        <end position="444"/>
    </location>
</feature>
<feature type="transmembrane region" description="Helical" evidence="5">
    <location>
        <begin position="445"/>
        <end position="465"/>
    </location>
</feature>
<feature type="topological domain" description="Extracellular" evidence="5">
    <location>
        <begin position="466"/>
        <end position="502"/>
    </location>
</feature>
<feature type="transmembrane region" description="Helical" evidence="5">
    <location>
        <begin position="503"/>
        <end position="523"/>
    </location>
</feature>
<feature type="topological domain" description="Cytoplasmic" evidence="5">
    <location>
        <begin position="524"/>
        <end position="548"/>
    </location>
</feature>
<feature type="domain" description="FZ" evidence="6">
    <location>
        <begin position="31"/>
        <end position="150"/>
    </location>
</feature>
<feature type="short sequence motif" description="Lys-Thr-X-X-X-Trp motif, mediates interaction with the PDZ domain of Dvl family members" evidence="10">
    <location>
        <begin position="526"/>
        <end position="531"/>
    </location>
</feature>
<feature type="short sequence motif" description="PDZ-binding" evidence="5">
    <location>
        <begin position="546"/>
        <end position="548"/>
    </location>
</feature>
<feature type="glycosylation site" description="N-linked (GlcNAc...) asparagine" evidence="5">
    <location>
        <position position="50"/>
    </location>
</feature>
<feature type="glycosylation site" description="N-linked (GlcNAc...) asparagine" evidence="5">
    <location>
        <position position="151"/>
    </location>
</feature>
<feature type="disulfide bond" evidence="6">
    <location>
        <begin position="36"/>
        <end position="97"/>
    </location>
</feature>
<feature type="disulfide bond" evidence="6">
    <location>
        <begin position="44"/>
        <end position="90"/>
    </location>
</feature>
<feature type="disulfide bond" evidence="6">
    <location>
        <begin position="81"/>
        <end position="118"/>
    </location>
</feature>
<feature type="disulfide bond" evidence="6">
    <location>
        <begin position="107"/>
        <end position="147"/>
    </location>
</feature>
<feature type="disulfide bond" evidence="6">
    <location>
        <begin position="111"/>
        <end position="135"/>
    </location>
</feature>
<feature type="mutagenesis site" description="Reduced binding to dvl1." evidence="10">
    <original>K</original>
    <variation>M</variation>
    <location>
        <position position="526"/>
    </location>
</feature>
<feature type="mutagenesis site" description="Reduced binding to dvl1." evidence="10">
    <original>W</original>
    <variation>G</variation>
    <location>
        <position position="531"/>
    </location>
</feature>
<feature type="sequence conflict" description="In Ref. 1; AAD44331." evidence="11" ref="1">
    <original>L</original>
    <variation>P</variation>
    <location>
        <position position="168"/>
    </location>
</feature>
<organism>
    <name type="scientific">Xenopus laevis</name>
    <name type="common">African clawed frog</name>
    <dbReference type="NCBI Taxonomy" id="8355"/>
    <lineage>
        <taxon>Eukaryota</taxon>
        <taxon>Metazoa</taxon>
        <taxon>Chordata</taxon>
        <taxon>Craniata</taxon>
        <taxon>Vertebrata</taxon>
        <taxon>Euteleostomi</taxon>
        <taxon>Amphibia</taxon>
        <taxon>Batrachia</taxon>
        <taxon>Anura</taxon>
        <taxon>Pipoidea</taxon>
        <taxon>Pipidae</taxon>
        <taxon>Xenopodinae</taxon>
        <taxon>Xenopus</taxon>
        <taxon>Xenopus</taxon>
    </lineage>
</organism>